<protein>
    <recommendedName>
        <fullName evidence="1">Large ribosomal subunit protein uL23</fullName>
    </recommendedName>
    <alternativeName>
        <fullName evidence="2">50S ribosomal protein L23</fullName>
    </alternativeName>
</protein>
<comment type="function">
    <text evidence="1">One of the early assembly proteins it binds 23S rRNA. One of the proteins that surrounds the polypeptide exit tunnel on the outside of the ribosome. Forms the main docking site for trigger factor binding to the ribosome.</text>
</comment>
<comment type="subunit">
    <text evidence="1">Part of the 50S ribosomal subunit. Contacts protein L29, and trigger factor when it is bound to the ribosome.</text>
</comment>
<comment type="similarity">
    <text evidence="1">Belongs to the universal ribosomal protein uL23 family.</text>
</comment>
<proteinExistence type="inferred from homology"/>
<gene>
    <name evidence="1" type="primary">rplW</name>
    <name type="ordered locus">SE_1822</name>
</gene>
<name>RL23_STAES</name>
<feature type="chain" id="PRO_0000224177" description="Large ribosomal subunit protein uL23">
    <location>
        <begin position="1"/>
        <end position="91"/>
    </location>
</feature>
<keyword id="KW-0687">Ribonucleoprotein</keyword>
<keyword id="KW-0689">Ribosomal protein</keyword>
<keyword id="KW-0694">RNA-binding</keyword>
<keyword id="KW-0699">rRNA-binding</keyword>
<reference key="1">
    <citation type="journal article" date="2003" name="Mol. Microbiol.">
        <title>Genome-based analysis of virulence genes in a non-biofilm-forming Staphylococcus epidermidis strain (ATCC 12228).</title>
        <authorList>
            <person name="Zhang Y.-Q."/>
            <person name="Ren S.-X."/>
            <person name="Li H.-L."/>
            <person name="Wang Y.-X."/>
            <person name="Fu G."/>
            <person name="Yang J."/>
            <person name="Qin Z.-Q."/>
            <person name="Miao Y.-G."/>
            <person name="Wang W.-Y."/>
            <person name="Chen R.-S."/>
            <person name="Shen Y."/>
            <person name="Chen Z."/>
            <person name="Yuan Z.-H."/>
            <person name="Zhao G.-P."/>
            <person name="Qu D."/>
            <person name="Danchin A."/>
            <person name="Wen Y.-M."/>
        </authorList>
    </citation>
    <scope>NUCLEOTIDE SEQUENCE [LARGE SCALE GENOMIC DNA]</scope>
    <source>
        <strain>ATCC 12228 / FDA PCI 1200</strain>
    </source>
</reference>
<evidence type="ECO:0000255" key="1">
    <source>
        <dbReference type="HAMAP-Rule" id="MF_01369"/>
    </source>
</evidence>
<evidence type="ECO:0000305" key="2"/>
<organism>
    <name type="scientific">Staphylococcus epidermidis (strain ATCC 12228 / FDA PCI 1200)</name>
    <dbReference type="NCBI Taxonomy" id="176280"/>
    <lineage>
        <taxon>Bacteria</taxon>
        <taxon>Bacillati</taxon>
        <taxon>Bacillota</taxon>
        <taxon>Bacilli</taxon>
        <taxon>Bacillales</taxon>
        <taxon>Staphylococcaceae</taxon>
        <taxon>Staphylococcus</taxon>
    </lineage>
</organism>
<sequence length="91" mass="10599">MEARDVLKRPVITEKSSEAMAEDKYTFDVDTRANKTQVKIAVEEIFDVKVDSVNIINYKPKKKRMGRYQGYTNKRRKAIVKLKEGSIDLFN</sequence>
<accession>Q8CRG2</accession>
<dbReference type="EMBL" id="AE015929">
    <property type="protein sequence ID" value="AAO05463.1"/>
    <property type="molecule type" value="Genomic_DNA"/>
</dbReference>
<dbReference type="RefSeq" id="NP_765377.1">
    <property type="nucleotide sequence ID" value="NC_004461.1"/>
</dbReference>
<dbReference type="RefSeq" id="WP_001829755.1">
    <property type="nucleotide sequence ID" value="NZ_WBME01000007.1"/>
</dbReference>
<dbReference type="SMR" id="Q8CRG2"/>
<dbReference type="GeneID" id="50018075"/>
<dbReference type="KEGG" id="sep:SE_1822"/>
<dbReference type="PATRIC" id="fig|176280.10.peg.1778"/>
<dbReference type="eggNOG" id="COG0089">
    <property type="taxonomic scope" value="Bacteria"/>
</dbReference>
<dbReference type="HOGENOM" id="CLU_037562_3_2_9"/>
<dbReference type="OrthoDB" id="9793353at2"/>
<dbReference type="Proteomes" id="UP000001411">
    <property type="component" value="Chromosome"/>
</dbReference>
<dbReference type="GO" id="GO:1990904">
    <property type="term" value="C:ribonucleoprotein complex"/>
    <property type="evidence" value="ECO:0007669"/>
    <property type="project" value="UniProtKB-KW"/>
</dbReference>
<dbReference type="GO" id="GO:0005840">
    <property type="term" value="C:ribosome"/>
    <property type="evidence" value="ECO:0007669"/>
    <property type="project" value="UniProtKB-KW"/>
</dbReference>
<dbReference type="GO" id="GO:0019843">
    <property type="term" value="F:rRNA binding"/>
    <property type="evidence" value="ECO:0007669"/>
    <property type="project" value="UniProtKB-UniRule"/>
</dbReference>
<dbReference type="GO" id="GO:0003735">
    <property type="term" value="F:structural constituent of ribosome"/>
    <property type="evidence" value="ECO:0007669"/>
    <property type="project" value="InterPro"/>
</dbReference>
<dbReference type="GO" id="GO:0006412">
    <property type="term" value="P:translation"/>
    <property type="evidence" value="ECO:0007669"/>
    <property type="project" value="UniProtKB-UniRule"/>
</dbReference>
<dbReference type="FunFam" id="3.30.70.330:FF:000001">
    <property type="entry name" value="50S ribosomal protein L23"/>
    <property type="match status" value="1"/>
</dbReference>
<dbReference type="Gene3D" id="3.30.70.330">
    <property type="match status" value="1"/>
</dbReference>
<dbReference type="HAMAP" id="MF_01369_B">
    <property type="entry name" value="Ribosomal_uL23_B"/>
    <property type="match status" value="1"/>
</dbReference>
<dbReference type="InterPro" id="IPR012677">
    <property type="entry name" value="Nucleotide-bd_a/b_plait_sf"/>
</dbReference>
<dbReference type="InterPro" id="IPR013025">
    <property type="entry name" value="Ribosomal_uL23-like"/>
</dbReference>
<dbReference type="InterPro" id="IPR012678">
    <property type="entry name" value="Ribosomal_uL23/eL15/eS24_sf"/>
</dbReference>
<dbReference type="NCBIfam" id="NF004363">
    <property type="entry name" value="PRK05738.2-4"/>
    <property type="match status" value="1"/>
</dbReference>
<dbReference type="PANTHER" id="PTHR11620">
    <property type="entry name" value="60S RIBOSOMAL PROTEIN L23A"/>
    <property type="match status" value="1"/>
</dbReference>
<dbReference type="Pfam" id="PF00276">
    <property type="entry name" value="Ribosomal_L23"/>
    <property type="match status" value="1"/>
</dbReference>
<dbReference type="SUPFAM" id="SSF54189">
    <property type="entry name" value="Ribosomal proteins S24e, L23 and L15e"/>
    <property type="match status" value="1"/>
</dbReference>